<gene>
    <name type="primary">SAR1</name>
    <name type="ordered locus">CAALFM_C602220WA</name>
    <name type="ORF">CaO19.10966</name>
    <name type="ORF">CaO19.3462</name>
</gene>
<accession>Q59S78</accession>
<accession>A0A1D8PPU1</accession>
<evidence type="ECO:0000250" key="1"/>
<evidence type="ECO:0000269" key="2">
    <source>
    </source>
</evidence>
<evidence type="ECO:0000305" key="3"/>
<evidence type="ECO:0000305" key="4">
    <source>
    </source>
</evidence>
<reference key="1">
    <citation type="journal article" date="2004" name="Proc. Natl. Acad. Sci. U.S.A.">
        <title>The diploid genome sequence of Candida albicans.</title>
        <authorList>
            <person name="Jones T."/>
            <person name="Federspiel N.A."/>
            <person name="Chibana H."/>
            <person name="Dungan J."/>
            <person name="Kalman S."/>
            <person name="Magee B.B."/>
            <person name="Newport G."/>
            <person name="Thorstenson Y.R."/>
            <person name="Agabian N."/>
            <person name="Magee P.T."/>
            <person name="Davis R.W."/>
            <person name="Scherer S."/>
        </authorList>
    </citation>
    <scope>NUCLEOTIDE SEQUENCE [LARGE SCALE GENOMIC DNA]</scope>
    <source>
        <strain>SC5314 / ATCC MYA-2876</strain>
    </source>
</reference>
<reference key="2">
    <citation type="journal article" date="2007" name="Genome Biol.">
        <title>Assembly of the Candida albicans genome into sixteen supercontigs aligned on the eight chromosomes.</title>
        <authorList>
            <person name="van het Hoog M."/>
            <person name="Rast T.J."/>
            <person name="Martchenko M."/>
            <person name="Grindle S."/>
            <person name="Dignard D."/>
            <person name="Hogues H."/>
            <person name="Cuomo C."/>
            <person name="Berriman M."/>
            <person name="Scherer S."/>
            <person name="Magee B.B."/>
            <person name="Whiteway M."/>
            <person name="Chibana H."/>
            <person name="Nantel A."/>
            <person name="Magee P.T."/>
        </authorList>
    </citation>
    <scope>GENOME REANNOTATION</scope>
    <source>
        <strain>SC5314 / ATCC MYA-2876</strain>
    </source>
</reference>
<reference key="3">
    <citation type="journal article" date="2013" name="Genome Biol.">
        <title>Assembly of a phased diploid Candida albicans genome facilitates allele-specific measurements and provides a simple model for repeat and indel structure.</title>
        <authorList>
            <person name="Muzzey D."/>
            <person name="Schwartz K."/>
            <person name="Weissman J.S."/>
            <person name="Sherlock G."/>
        </authorList>
    </citation>
    <scope>NUCLEOTIDE SEQUENCE [LARGE SCALE GENOMIC DNA]</scope>
    <scope>GENOME REANNOTATION</scope>
    <source>
        <strain>SC5314 / ATCC MYA-2876</strain>
    </source>
</reference>
<reference key="4">
    <citation type="journal article" date="2002" name="Yeast">
        <title>Functional characterization of the Candida albicans homologue of secretion-associated and Ras-related (Sar1) protein.</title>
        <authorList>
            <person name="Jiang L."/>
            <person name="Lee C.-M."/>
            <person name="Shen S.-H."/>
        </authorList>
    </citation>
    <scope>IDENTIFICATION OF INTRON</scope>
    <scope>FUNCTION</scope>
    <scope>CATALYTIC ACTIVITY</scope>
    <scope>GTP-BINDING</scope>
</reference>
<comment type="function">
    <text evidence="1 2">Small GTPase component of the coat protein complex II (COPII) which promotes the formation of transport vesicles from the endoplasmic reticulum (ER). The coat has two main functions, the physical deformation of the endoplasmic reticulum membrane into vesicles and the selection of cargo molecules. SAR1 controls the coat assembly in a stepwise manner. Activated SAR1-GTP binds to membranes first and recruits the SEC23/24 complex. These SEC23/24-SAR1 prebudding intermediates are then collected by the SEC13/31 complex as subunits polymerize to form coated transport vesicles. Conversion to SAR1-GDP triggers coat release and recycles COPII subunits (By similarity).</text>
</comment>
<comment type="catalytic activity">
    <reaction evidence="2">
        <text>GTP + H2O = GDP + phosphate + H(+)</text>
        <dbReference type="Rhea" id="RHEA:19669"/>
        <dbReference type="ChEBI" id="CHEBI:15377"/>
        <dbReference type="ChEBI" id="CHEBI:15378"/>
        <dbReference type="ChEBI" id="CHEBI:37565"/>
        <dbReference type="ChEBI" id="CHEBI:43474"/>
        <dbReference type="ChEBI" id="CHEBI:58189"/>
    </reaction>
</comment>
<comment type="subunit">
    <text evidence="1">COPII is composed of at least 5 proteins: the SEC23/24 complex, the SEC13/31 complex and SAR1.</text>
</comment>
<comment type="subcellular location">
    <subcellularLocation>
        <location evidence="1">Cytoplasmic vesicle</location>
        <location evidence="1">COPII-coated vesicle membrane</location>
        <topology evidence="1">Peripheral membrane protein</topology>
        <orientation evidence="1">Cytoplasmic side</orientation>
    </subcellularLocation>
    <subcellularLocation>
        <location evidence="1">Endoplasmic reticulum membrane</location>
        <topology evidence="1">Peripheral membrane protein</topology>
        <orientation evidence="1">Cytoplasmic side</orientation>
    </subcellularLocation>
    <subcellularLocation>
        <location evidence="1">Golgi apparatus membrane</location>
        <topology evidence="1">Peripheral membrane protein</topology>
        <orientation evidence="1">Cytoplasmic side</orientation>
    </subcellularLocation>
</comment>
<comment type="similarity">
    <text evidence="3">Belongs to the small GTPase superfamily. SAR1 family.</text>
</comment>
<feature type="chain" id="PRO_0000295510" description="Small COPII coat GTPase SAR1">
    <location>
        <begin position="1"/>
        <end position="190"/>
    </location>
</feature>
<feature type="binding site" evidence="2">
    <location>
        <begin position="27"/>
        <end position="32"/>
    </location>
    <ligand>
        <name>GTP</name>
        <dbReference type="ChEBI" id="CHEBI:37565"/>
    </ligand>
</feature>
<feature type="binding site" evidence="4">
    <location>
        <begin position="70"/>
        <end position="73"/>
    </location>
    <ligand>
        <name>GTP</name>
        <dbReference type="ChEBI" id="CHEBI:37565"/>
    </ligand>
</feature>
<feature type="binding site" evidence="4">
    <location>
        <begin position="129"/>
        <end position="132"/>
    </location>
    <ligand>
        <name>GTP</name>
        <dbReference type="ChEBI" id="CHEBI:37565"/>
    </ligand>
</feature>
<name>SAR1_CANAL</name>
<proteinExistence type="evidence at protein level"/>
<dbReference type="EC" id="3.6.5.-" evidence="2"/>
<dbReference type="EMBL" id="CP017628">
    <property type="protein sequence ID" value="AOW30157.1"/>
    <property type="molecule type" value="Genomic_DNA"/>
</dbReference>
<dbReference type="RefSeq" id="XP_019331008.1">
    <property type="nucleotide sequence ID" value="XM_019475463.1"/>
</dbReference>
<dbReference type="SMR" id="Q59S78"/>
<dbReference type="FunCoup" id="Q59S78">
    <property type="interactions" value="970"/>
</dbReference>
<dbReference type="STRING" id="237561.Q59S78"/>
<dbReference type="EnsemblFungi" id="C6_02220W_A-T">
    <property type="protein sequence ID" value="C6_02220W_A-T-p1"/>
    <property type="gene ID" value="C6_02220W_A"/>
</dbReference>
<dbReference type="GeneID" id="3645865"/>
<dbReference type="KEGG" id="cal:CAALFM_C602220WA"/>
<dbReference type="CGD" id="CAL0000177161">
    <property type="gene designation" value="SAR1"/>
</dbReference>
<dbReference type="VEuPathDB" id="FungiDB:C6_02220W_A"/>
<dbReference type="eggNOG" id="KOG0077">
    <property type="taxonomic scope" value="Eukaryota"/>
</dbReference>
<dbReference type="HOGENOM" id="CLU_040729_6_0_1"/>
<dbReference type="InParanoid" id="Q59S78"/>
<dbReference type="OMA" id="GLWNKHG"/>
<dbReference type="OrthoDB" id="2011769at2759"/>
<dbReference type="PRO" id="PR:Q59S78"/>
<dbReference type="Proteomes" id="UP000000559">
    <property type="component" value="Chromosome 6"/>
</dbReference>
<dbReference type="GO" id="GO:0030127">
    <property type="term" value="C:COPII vesicle coat"/>
    <property type="evidence" value="ECO:0000318"/>
    <property type="project" value="GO_Central"/>
</dbReference>
<dbReference type="GO" id="GO:0070971">
    <property type="term" value="C:endoplasmic reticulum exit site"/>
    <property type="evidence" value="ECO:0000318"/>
    <property type="project" value="GO_Central"/>
</dbReference>
<dbReference type="GO" id="GO:0005789">
    <property type="term" value="C:endoplasmic reticulum membrane"/>
    <property type="evidence" value="ECO:0007669"/>
    <property type="project" value="UniProtKB-SubCell"/>
</dbReference>
<dbReference type="GO" id="GO:0000139">
    <property type="term" value="C:Golgi membrane"/>
    <property type="evidence" value="ECO:0007669"/>
    <property type="project" value="UniProtKB-SubCell"/>
</dbReference>
<dbReference type="GO" id="GO:0044233">
    <property type="term" value="C:mitochondria-associated endoplasmic reticulum membrane contact site"/>
    <property type="evidence" value="ECO:0007669"/>
    <property type="project" value="EnsemblFungi"/>
</dbReference>
<dbReference type="GO" id="GO:0005739">
    <property type="term" value="C:mitochondrion"/>
    <property type="evidence" value="ECO:0007669"/>
    <property type="project" value="GOC"/>
</dbReference>
<dbReference type="GO" id="GO:0005525">
    <property type="term" value="F:GTP binding"/>
    <property type="evidence" value="ECO:0000314"/>
    <property type="project" value="CGD"/>
</dbReference>
<dbReference type="GO" id="GO:0003924">
    <property type="term" value="F:GTPase activity"/>
    <property type="evidence" value="ECO:0000316"/>
    <property type="project" value="CGD"/>
</dbReference>
<dbReference type="GO" id="GO:0090158">
    <property type="term" value="P:endoplasmic reticulum membrane organization"/>
    <property type="evidence" value="ECO:0007669"/>
    <property type="project" value="EnsemblFungi"/>
</dbReference>
<dbReference type="GO" id="GO:0006888">
    <property type="term" value="P:endoplasmic reticulum to Golgi vesicle-mediated transport"/>
    <property type="evidence" value="ECO:0000316"/>
    <property type="project" value="CGD"/>
</dbReference>
<dbReference type="GO" id="GO:0006886">
    <property type="term" value="P:intracellular protein transport"/>
    <property type="evidence" value="ECO:0007669"/>
    <property type="project" value="InterPro"/>
</dbReference>
<dbReference type="GO" id="GO:0061024">
    <property type="term" value="P:membrane organization"/>
    <property type="evidence" value="ECO:0000318"/>
    <property type="project" value="GO_Central"/>
</dbReference>
<dbReference type="GO" id="GO:0000266">
    <property type="term" value="P:mitochondrial fission"/>
    <property type="evidence" value="ECO:0007669"/>
    <property type="project" value="EnsemblFungi"/>
</dbReference>
<dbReference type="GO" id="GO:0007006">
    <property type="term" value="P:mitochondrial membrane organization"/>
    <property type="evidence" value="ECO:0007669"/>
    <property type="project" value="EnsemblFungi"/>
</dbReference>
<dbReference type="GO" id="GO:0006998">
    <property type="term" value="P:nuclear envelope organization"/>
    <property type="evidence" value="ECO:0007669"/>
    <property type="project" value="EnsemblFungi"/>
</dbReference>
<dbReference type="GO" id="GO:1902953">
    <property type="term" value="P:positive regulation of ER to Golgi vesicle-mediated transport"/>
    <property type="evidence" value="ECO:0007669"/>
    <property type="project" value="EnsemblFungi"/>
</dbReference>
<dbReference type="GO" id="GO:0070863">
    <property type="term" value="P:positive regulation of protein exit from endoplasmic reticulum"/>
    <property type="evidence" value="ECO:0007669"/>
    <property type="project" value="EnsemblFungi"/>
</dbReference>
<dbReference type="GO" id="GO:0003400">
    <property type="term" value="P:regulation of COPII vesicle coating"/>
    <property type="evidence" value="ECO:0000318"/>
    <property type="project" value="GO_Central"/>
</dbReference>
<dbReference type="GO" id="GO:0016050">
    <property type="term" value="P:vesicle organization"/>
    <property type="evidence" value="ECO:0000318"/>
    <property type="project" value="GO_Central"/>
</dbReference>
<dbReference type="CDD" id="cd00879">
    <property type="entry name" value="Sar1"/>
    <property type="match status" value="1"/>
</dbReference>
<dbReference type="FunFam" id="3.40.50.300:FF:000161">
    <property type="entry name" value="Small COPII coat GTPase"/>
    <property type="match status" value="1"/>
</dbReference>
<dbReference type="Gene3D" id="3.40.50.300">
    <property type="entry name" value="P-loop containing nucleotide triphosphate hydrolases"/>
    <property type="match status" value="1"/>
</dbReference>
<dbReference type="InterPro" id="IPR027417">
    <property type="entry name" value="P-loop_NTPase"/>
</dbReference>
<dbReference type="InterPro" id="IPR005225">
    <property type="entry name" value="Small_GTP-bd"/>
</dbReference>
<dbReference type="InterPro" id="IPR006689">
    <property type="entry name" value="Small_GTPase_ARF/SAR"/>
</dbReference>
<dbReference type="InterPro" id="IPR006687">
    <property type="entry name" value="Small_GTPase_SAR1"/>
</dbReference>
<dbReference type="NCBIfam" id="TIGR00231">
    <property type="entry name" value="small_GTP"/>
    <property type="match status" value="1"/>
</dbReference>
<dbReference type="PANTHER" id="PTHR45684">
    <property type="entry name" value="RE74312P"/>
    <property type="match status" value="1"/>
</dbReference>
<dbReference type="Pfam" id="PF00025">
    <property type="entry name" value="Arf"/>
    <property type="match status" value="1"/>
</dbReference>
<dbReference type="PRINTS" id="PR00328">
    <property type="entry name" value="SAR1GTPBP"/>
</dbReference>
<dbReference type="SMART" id="SM00177">
    <property type="entry name" value="ARF"/>
    <property type="match status" value="1"/>
</dbReference>
<dbReference type="SMART" id="SM00178">
    <property type="entry name" value="SAR"/>
    <property type="match status" value="1"/>
</dbReference>
<dbReference type="SUPFAM" id="SSF52540">
    <property type="entry name" value="P-loop containing nucleoside triphosphate hydrolases"/>
    <property type="match status" value="1"/>
</dbReference>
<dbReference type="PROSITE" id="PS51422">
    <property type="entry name" value="SAR1"/>
    <property type="match status" value="1"/>
</dbReference>
<organism>
    <name type="scientific">Candida albicans (strain SC5314 / ATCC MYA-2876)</name>
    <name type="common">Yeast</name>
    <dbReference type="NCBI Taxonomy" id="237561"/>
    <lineage>
        <taxon>Eukaryota</taxon>
        <taxon>Fungi</taxon>
        <taxon>Dikarya</taxon>
        <taxon>Ascomycota</taxon>
        <taxon>Saccharomycotina</taxon>
        <taxon>Pichiomycetes</taxon>
        <taxon>Debaryomycetaceae</taxon>
        <taxon>Candida/Lodderomyces clade</taxon>
        <taxon>Candida</taxon>
    </lineage>
</organism>
<protein>
    <recommendedName>
        <fullName>Small COPII coat GTPase SAR1</fullName>
        <ecNumber evidence="2">3.6.5.-</ecNumber>
    </recommendedName>
</protein>
<sequence length="190" mass="21482">MWIFDWFQDILSSLGLWNKHAKLLFLGLDNAGKTTLLHMLKNDRLATLQPTLHPTSEELAIGSVRFTTFDLGGHQQARRLWKDYFPEVNGIVFLVDAADTERFAESKAELESLFRIEELSQVPFVILGNKIDVPTAVGEMELKNALGLYNTTGKDTGKLPEGTRPIEVFMVSVVMRSGYGEAFKWLSQYI</sequence>
<keyword id="KW-0968">Cytoplasmic vesicle</keyword>
<keyword id="KW-0256">Endoplasmic reticulum</keyword>
<keyword id="KW-0931">ER-Golgi transport</keyword>
<keyword id="KW-0333">Golgi apparatus</keyword>
<keyword id="KW-0342">GTP-binding</keyword>
<keyword id="KW-0378">Hydrolase</keyword>
<keyword id="KW-0472">Membrane</keyword>
<keyword id="KW-0547">Nucleotide-binding</keyword>
<keyword id="KW-0653">Protein transport</keyword>
<keyword id="KW-1185">Reference proteome</keyword>
<keyword id="KW-0813">Transport</keyword>